<accession>A7YY62</accession>
<name>FHI1B_BOVIN</name>
<protein>
    <recommendedName>
        <fullName>FHF complex subunit HOOK-interacting protein 1B</fullName>
        <shortName>FHIP1B</shortName>
    </recommendedName>
    <alternativeName>
        <fullName>FTS- and Hook-interacting protein</fullName>
        <shortName>FHIP</shortName>
    </alternativeName>
</protein>
<feature type="chain" id="PRO_0000379000" description="FHF complex subunit HOOK-interacting protein 1B">
    <location>
        <begin position="1"/>
        <end position="973"/>
    </location>
</feature>
<feature type="region of interest" description="Disordered" evidence="4">
    <location>
        <begin position="466"/>
        <end position="493"/>
    </location>
</feature>
<feature type="region of interest" description="Disordered" evidence="4">
    <location>
        <begin position="510"/>
        <end position="547"/>
    </location>
</feature>
<feature type="region of interest" description="Disordered" evidence="4">
    <location>
        <begin position="573"/>
        <end position="647"/>
    </location>
</feature>
<feature type="compositionally biased region" description="Low complexity" evidence="4">
    <location>
        <begin position="482"/>
        <end position="493"/>
    </location>
</feature>
<feature type="compositionally biased region" description="Low complexity" evidence="4">
    <location>
        <begin position="529"/>
        <end position="538"/>
    </location>
</feature>
<feature type="compositionally biased region" description="Low complexity" evidence="4">
    <location>
        <begin position="622"/>
        <end position="639"/>
    </location>
</feature>
<feature type="modified residue" description="Phosphoserine" evidence="3">
    <location>
        <position position="467"/>
    </location>
</feature>
<feature type="modified residue" description="Phosphoserine" evidence="1">
    <location>
        <position position="510"/>
    </location>
</feature>
<feature type="modified residue" description="Phosphoserine" evidence="1">
    <location>
        <position position="523"/>
    </location>
</feature>
<feature type="modified residue" description="Phosphoserine" evidence="2">
    <location>
        <position position="529"/>
    </location>
</feature>
<feature type="modified residue" description="Phosphoserine" evidence="2">
    <location>
        <position position="533"/>
    </location>
</feature>
<feature type="modified residue" description="Phosphoserine" evidence="3">
    <location>
        <position position="859"/>
    </location>
</feature>
<feature type="modified residue" description="Phosphoserine" evidence="3">
    <location>
        <position position="898"/>
    </location>
</feature>
<gene>
    <name type="primary">FHIP1B</name>
    <name type="synonym">FAM160A2</name>
</gene>
<reference key="1">
    <citation type="submission" date="2007-07" db="EMBL/GenBank/DDBJ databases">
        <authorList>
            <consortium name="NIH - Mammalian Gene Collection (MGC) project"/>
        </authorList>
    </citation>
    <scope>NUCLEOTIDE SEQUENCE [LARGE SCALE MRNA]</scope>
    <source>
        <strain>Hereford</strain>
        <tissue>Ascending colon</tissue>
    </source>
</reference>
<keyword id="KW-0597">Phosphoprotein</keyword>
<keyword id="KW-0653">Protein transport</keyword>
<keyword id="KW-1185">Reference proteome</keyword>
<keyword id="KW-0813">Transport</keyword>
<proteinExistence type="evidence at transcript level"/>
<dbReference type="EMBL" id="BC151392">
    <property type="protein sequence ID" value="AAI51393.1"/>
    <property type="molecule type" value="mRNA"/>
</dbReference>
<dbReference type="RefSeq" id="NP_001095961.1">
    <property type="nucleotide sequence ID" value="NM_001102491.1"/>
</dbReference>
<dbReference type="RefSeq" id="XP_024830885.1">
    <property type="nucleotide sequence ID" value="XM_024975117.2"/>
</dbReference>
<dbReference type="SMR" id="A7YY62"/>
<dbReference type="FunCoup" id="A7YY62">
    <property type="interactions" value="3114"/>
</dbReference>
<dbReference type="STRING" id="9913.ENSBTAP00000027334"/>
<dbReference type="PaxDb" id="9913-ENSBTAP00000027334"/>
<dbReference type="GeneID" id="508334"/>
<dbReference type="KEGG" id="bta:508334"/>
<dbReference type="CTD" id="84067"/>
<dbReference type="VEuPathDB" id="HostDB:ENSBTAG00000020515"/>
<dbReference type="eggNOG" id="KOG3695">
    <property type="taxonomic scope" value="Eukaryota"/>
</dbReference>
<dbReference type="InParanoid" id="A7YY62"/>
<dbReference type="OMA" id="QQTHTEC"/>
<dbReference type="OrthoDB" id="6287422at2759"/>
<dbReference type="Proteomes" id="UP000009136">
    <property type="component" value="Chromosome 15"/>
</dbReference>
<dbReference type="Bgee" id="ENSBTAG00000020515">
    <property type="expression patterns" value="Expressed in neutrophil and 105 other cell types or tissues"/>
</dbReference>
<dbReference type="GO" id="GO:0070695">
    <property type="term" value="C:FHF complex"/>
    <property type="evidence" value="ECO:0000250"/>
    <property type="project" value="UniProtKB"/>
</dbReference>
<dbReference type="GO" id="GO:0045022">
    <property type="term" value="P:early endosome to late endosome transport"/>
    <property type="evidence" value="ECO:0000250"/>
    <property type="project" value="UniProtKB"/>
</dbReference>
<dbReference type="GO" id="GO:0007032">
    <property type="term" value="P:endosome organization"/>
    <property type="evidence" value="ECO:0000250"/>
    <property type="project" value="UniProtKB"/>
</dbReference>
<dbReference type="GO" id="GO:0008333">
    <property type="term" value="P:endosome to lysosome transport"/>
    <property type="evidence" value="ECO:0000250"/>
    <property type="project" value="UniProtKB"/>
</dbReference>
<dbReference type="GO" id="GO:0007040">
    <property type="term" value="P:lysosome organization"/>
    <property type="evidence" value="ECO:0000250"/>
    <property type="project" value="UniProtKB"/>
</dbReference>
<dbReference type="GO" id="GO:1905719">
    <property type="term" value="P:protein localization to perinuclear region of cytoplasm"/>
    <property type="evidence" value="ECO:0000250"/>
    <property type="project" value="UniProtKB"/>
</dbReference>
<dbReference type="GO" id="GO:0015031">
    <property type="term" value="P:protein transport"/>
    <property type="evidence" value="ECO:0007669"/>
    <property type="project" value="UniProtKB-KW"/>
</dbReference>
<dbReference type="InterPro" id="IPR019384">
    <property type="entry name" value="FHIP"/>
</dbReference>
<dbReference type="InterPro" id="IPR045669">
    <property type="entry name" value="FHIP_C"/>
</dbReference>
<dbReference type="InterPro" id="IPR045668">
    <property type="entry name" value="FHIP_KELAA_motif"/>
</dbReference>
<dbReference type="PANTHER" id="PTHR21705:SF4">
    <property type="entry name" value="FHF COMPLEX SUBUNIT HOOK-INTERACTING PROTEIN 1B"/>
    <property type="match status" value="1"/>
</dbReference>
<dbReference type="PANTHER" id="PTHR21705">
    <property type="entry name" value="RAI16 PROTEIN-RELATED"/>
    <property type="match status" value="1"/>
</dbReference>
<dbReference type="Pfam" id="PF19314">
    <property type="entry name" value="DUF5917"/>
    <property type="match status" value="1"/>
</dbReference>
<dbReference type="Pfam" id="PF19311">
    <property type="entry name" value="KELAA"/>
    <property type="match status" value="1"/>
</dbReference>
<dbReference type="Pfam" id="PF10257">
    <property type="entry name" value="RAI16-like"/>
    <property type="match status" value="1"/>
</dbReference>
<organism>
    <name type="scientific">Bos taurus</name>
    <name type="common">Bovine</name>
    <dbReference type="NCBI Taxonomy" id="9913"/>
    <lineage>
        <taxon>Eukaryota</taxon>
        <taxon>Metazoa</taxon>
        <taxon>Chordata</taxon>
        <taxon>Craniata</taxon>
        <taxon>Vertebrata</taxon>
        <taxon>Euteleostomi</taxon>
        <taxon>Mammalia</taxon>
        <taxon>Eutheria</taxon>
        <taxon>Laurasiatheria</taxon>
        <taxon>Artiodactyla</taxon>
        <taxon>Ruminantia</taxon>
        <taxon>Pecora</taxon>
        <taxon>Bovidae</taxon>
        <taxon>Bovinae</taxon>
        <taxon>Bos</taxon>
    </lineage>
</organism>
<sequence>MERMNWLSRLASRGPGHRVPQGASLQTPVMADPETCLMVFKNHWSQVVRILERQGPRAAPGGADDLSAVRNHTYQMLTLLAEDRAVPLVPTAPGPLLEFALREDLLTRVLTWQLQWDELGDGVEERRAEQLKLFEMLVSEARQPLLRHGPVREALLILLDACGRPVPSSPALDEGLVLLLSQLCVCLAREPSLLEFFLQPPPEPGAAPRLLLFSRLVPFVHREGTLGQQARDALLLLMALSAGSPTVGCYIADHSYFCPVLATGLSALYSSLPRKIEVPGDDWHCLRREDWLGVPALALFMSSLEFCNAVIQVAHPLVQKQLVDYIHNGFLVPVMGPALHKTSVEEMIASTAYLELFLRSISEPALLRTFLRFLLLHRHDTHTILDTLVARIGSNSRLCMVSLSLFRTLLNLSCEDVLLQLVLRYLVPCNHVMLSQKPAVRDVDLYGRAADKFLSLIPRCCRHHASSPSRPEHASWARGPGSPSVDSSSVVTVHRPSTPSRLALFLRQQSLGGSESPAPAPRSPGLATSPASSPGRRPSPVEEPGELEDNYLEYLREARRGVDRCVQACRTWSAPYDGERPPPEPSPVGSRTKKRSLLPEEGRDNAGGGEEEELGSGGLAGGARESLGHLPPPQLNGLPGPWPEGAKKVRRVPKEGAGEPLEDTSEGMAGLEGFGQELRELEVALSNGGAGSEPPLEPSLPLEEEEAYESFTCSPEPPGPFLSSPLRTLNQLPSQPFTGPFMAVLFAKLENMLQNSVYVNFLLTGLVAQLACHPQPLLRSFLLNTNMVFQPSVKSLLQVLGSVKNKIESFAASQEDFPALLSKAKKYLIARGKLDWTEGPAAGPAPRRSDSLVKSRRPSLGELLLRHAHSPTRARQAAQMVLQPGRDGGAGLGLGGGSPGASTPVLPARGGAPERQGEALRVKNAVYCAVIFPEFLKELAAISQAHAVTSPFLLDTSEEGSGPPVSGFGPLNP</sequence>
<comment type="function">
    <text evidence="3">Component of the FTS/Hook/FHIP complex (FHF complex). The FHF complex may function to promote vesicle trafficking and/or fusion via the homotypic vesicular protein sorting complex (the HOPS complex). FHF complex promotes the distribution of AP-4 complex to the perinuclear area of the cell.</text>
</comment>
<comment type="subunit">
    <text evidence="3">Component of the FTS/Hook/FHIP complex (FHF complex), composed of AKTIP/FTS, FHIP1B, and one or more members of the Hook family of proteins HOOK1, HOOK2, and HOOK3. The FHF complex associates with the homotypic vesicular sorting complex (the HOPS complex).</text>
</comment>
<comment type="similarity">
    <text evidence="5">Belongs to the FHIP family.</text>
</comment>
<evidence type="ECO:0000250" key="1">
    <source>
        <dbReference type="UniProtKB" id="Q3U2I3"/>
    </source>
</evidence>
<evidence type="ECO:0000250" key="2">
    <source>
        <dbReference type="UniProtKB" id="Q66H54"/>
    </source>
</evidence>
<evidence type="ECO:0000250" key="3">
    <source>
        <dbReference type="UniProtKB" id="Q8N612"/>
    </source>
</evidence>
<evidence type="ECO:0000256" key="4">
    <source>
        <dbReference type="SAM" id="MobiDB-lite"/>
    </source>
</evidence>
<evidence type="ECO:0000305" key="5"/>